<gene>
    <name type="primary">oprM</name>
    <name type="synonym">oprK</name>
    <name type="ordered locus">PA0427</name>
</gene>
<keyword id="KW-0002">3D-structure</keyword>
<keyword id="KW-0046">Antibiotic resistance</keyword>
<keyword id="KW-0998">Cell outer membrane</keyword>
<keyword id="KW-0903">Direct protein sequencing</keyword>
<keyword id="KW-0449">Lipoprotein</keyword>
<keyword id="KW-0472">Membrane</keyword>
<keyword id="KW-0564">Palmitate</keyword>
<keyword id="KW-1185">Reference proteome</keyword>
<keyword id="KW-0732">Signal</keyword>
<keyword id="KW-0812">Transmembrane</keyword>
<keyword id="KW-1134">Transmembrane beta strand</keyword>
<keyword id="KW-0813">Transport</keyword>
<proteinExistence type="evidence at protein level"/>
<feature type="signal peptide" evidence="1">
    <location>
        <begin position="1"/>
        <end position="17"/>
    </location>
</feature>
<feature type="chain" id="PRO_0000030999" description="Outer membrane protein OprM">
    <location>
        <begin position="18"/>
        <end position="485"/>
    </location>
</feature>
<feature type="lipid moiety-binding region" description="N-palmitoyl cysteine" evidence="1 2">
    <location>
        <position position="18"/>
    </location>
</feature>
<feature type="lipid moiety-binding region" description="S-diacylglycerol cysteine" evidence="20">
    <location>
        <position position="18"/>
    </location>
</feature>
<feature type="mutagenesis site" description="Replaces the endogenous lipoprotein signal by the signal for the outer membrane protein OprF. A functional outer membrane targeted protein is made." evidence="4">
    <original>MKRSFLSLAVAAVVLSGC</original>
    <variation>MKLKNTLGVVIGSLVAASAMNAFAQG</variation>
    <location>
        <begin position="1"/>
        <end position="18"/>
    </location>
</feature>
<feature type="mutagenesis site" description="No palmitoylation occurs. The protein functions normally in antibiotic efflux." evidence="2">
    <original>C</original>
    <variation>G</variation>
    <variation>F</variation>
    <variation>W</variation>
    <location>
        <position position="18"/>
    </location>
</feature>
<feature type="mutagenesis site" description="No protein produced." evidence="4">
    <location>
        <begin position="142"/>
        <end position="147"/>
    </location>
</feature>
<feature type="mutagenesis site" description="No protein produced." evidence="4">
    <location>
        <begin position="162"/>
        <end position="170"/>
    </location>
</feature>
<feature type="mutagenesis site" description="A non-functional protein is produced." evidence="4">
    <location>
        <begin position="216"/>
        <end position="226"/>
    </location>
</feature>
<feature type="mutagenesis site" description="Abolishes complex formation." evidence="9">
    <original>G</original>
    <variation>A</variation>
    <location>
        <position position="216"/>
    </location>
</feature>
<feature type="mutagenesis site" description="A non-functional protein is produced." evidence="4">
    <location>
        <begin position="295"/>
        <end position="303"/>
    </location>
</feature>
<feature type="mutagenesis site" description="No protein produced." evidence="4">
    <location>
        <begin position="334"/>
        <end position="343"/>
    </location>
</feature>
<feature type="mutagenesis site" description="No protein produced." evidence="4">
    <location>
        <begin position="358"/>
        <end position="366"/>
    </location>
</feature>
<feature type="mutagenesis site" description="Abolishes complex formation." evidence="9">
    <original>R</original>
    <variation>A</variation>
    <location>
        <position position="420"/>
    </location>
</feature>
<feature type="mutagenesis site" description="Abolishes complex formation." evidence="9">
    <original>G</original>
    <variation>A</variation>
    <location>
        <position position="424"/>
    </location>
</feature>
<feature type="mutagenesis site" description="No protein produced." evidence="4">
    <location>
        <begin position="462"/>
        <end position="467"/>
    </location>
</feature>
<feature type="sequence conflict" description="In Ref. 1; AAA74435." evidence="19" ref="1">
    <original>GGGWNQQTVTQQQTAKKEDPQA</original>
    <variation>WGGDCFDTCQKRAG</variation>
    <location>
        <begin position="464"/>
        <end position="485"/>
    </location>
</feature>
<feature type="strand" evidence="26">
    <location>
        <begin position="38"/>
        <end position="41"/>
    </location>
</feature>
<feature type="turn" evidence="25">
    <location>
        <begin position="52"/>
        <end position="54"/>
    </location>
</feature>
<feature type="helix" evidence="25">
    <location>
        <begin position="57"/>
        <end position="60"/>
    </location>
</feature>
<feature type="helix" evidence="25">
    <location>
        <begin position="64"/>
        <end position="76"/>
    </location>
</feature>
<feature type="helix" evidence="25">
    <location>
        <begin position="78"/>
        <end position="99"/>
    </location>
</feature>
<feature type="strand" evidence="25">
    <location>
        <begin position="105"/>
        <end position="116"/>
    </location>
</feature>
<feature type="turn" evidence="25">
    <location>
        <begin position="118"/>
        <end position="120"/>
    </location>
</feature>
<feature type="strand" evidence="25">
    <location>
        <begin position="121"/>
        <end position="125"/>
    </location>
</feature>
<feature type="strand" evidence="25">
    <location>
        <begin position="127"/>
        <end position="143"/>
    </location>
</feature>
<feature type="strand" evidence="28">
    <location>
        <begin position="145"/>
        <end position="147"/>
    </location>
</feature>
<feature type="helix" evidence="25">
    <location>
        <begin position="148"/>
        <end position="213"/>
    </location>
</feature>
<feature type="turn" evidence="25">
    <location>
        <begin position="214"/>
        <end position="216"/>
    </location>
</feature>
<feature type="helix" evidence="25">
    <location>
        <begin position="220"/>
        <end position="255"/>
    </location>
</feature>
<feature type="strand" evidence="27">
    <location>
        <begin position="269"/>
        <end position="271"/>
    </location>
</feature>
<feature type="helix" evidence="25">
    <location>
        <begin position="282"/>
        <end position="284"/>
    </location>
</feature>
<feature type="helix" evidence="25">
    <location>
        <begin position="285"/>
        <end position="288"/>
    </location>
</feature>
<feature type="helix" evidence="25">
    <location>
        <begin position="290"/>
        <end position="310"/>
    </location>
</feature>
<feature type="turn" evidence="26">
    <location>
        <begin position="311"/>
        <end position="313"/>
    </location>
</feature>
<feature type="strand" evidence="25">
    <location>
        <begin position="316"/>
        <end position="330"/>
    </location>
</feature>
<feature type="strand" evidence="25">
    <location>
        <begin position="333"/>
        <end position="335"/>
    </location>
</feature>
<feature type="strand" evidence="25">
    <location>
        <begin position="339"/>
        <end position="352"/>
    </location>
</feature>
<feature type="helix" evidence="25">
    <location>
        <begin position="356"/>
        <end position="422"/>
    </location>
</feature>
<feature type="helix" evidence="25">
    <location>
        <begin position="428"/>
        <end position="463"/>
    </location>
</feature>
<feature type="turn" evidence="28">
    <location>
        <begin position="464"/>
        <end position="466"/>
    </location>
</feature>
<feature type="strand" evidence="26">
    <location>
        <begin position="468"/>
        <end position="470"/>
    </location>
</feature>
<protein>
    <recommendedName>
        <fullName>Outer membrane protein OprM</fullName>
    </recommendedName>
</protein>
<organism>
    <name type="scientific">Pseudomonas aeruginosa (strain ATCC 15692 / DSM 22644 / CIP 104116 / JCM 14847 / LMG 12228 / 1C / PRS 101 / PAO1)</name>
    <dbReference type="NCBI Taxonomy" id="208964"/>
    <lineage>
        <taxon>Bacteria</taxon>
        <taxon>Pseudomonadati</taxon>
        <taxon>Pseudomonadota</taxon>
        <taxon>Gammaproteobacteria</taxon>
        <taxon>Pseudomonadales</taxon>
        <taxon>Pseudomonadaceae</taxon>
        <taxon>Pseudomonas</taxon>
    </lineage>
</organism>
<comment type="function">
    <text evidence="2 3 8 9 10 11 12 13 14 15 16 17 18">The outer membrane component of the MexAB-OprM efflux system that confers multidrug resistance (PubMed:10889211, PubMed:25901994, PubMed:30944318, PubMed:33009415, PubMed:8226684). Functions as the major efflux pump for n-hexane and p-xylene efflux (PubMed:9603892). Has been shown in one study to be involved in the active efflux of the autoinducer N-(3-oxododecanoyl) homoserine lactone, thereby playing an indirect role in quorum-sensing; but has been shown in another study not to be involved in efflux of this autoinducer (PubMed:32715566, PubMed:9973347). Over-expression of the pump increases antibiotic and solvent efflux capacities (PubMed:8540696). Can replace the OprJ outer membrane component of the MexCD-OprJ pump; the antibiotics exported are those exported by the intact MexCD pump, showing that efflux substrate specificity is not conferred by this component (PubMed:9401051). Serves as the outer membrane component for the MexXY efflux system (PubMed:10952562). Implicated in the secretion of the siderophore pyoverdine (PubMed:7968531, PubMed:8226684). OprM is probably involved in the efflux of the siderophore across the outer membrane (PubMed:7968531, PubMed:8226684).</text>
</comment>
<comment type="activity regulation">
    <text evidence="7 8 13">Export of antibiotics and solvents is dramatically decreased in the presence of the protonophore carbonyl cyanide m-chlorophenylhydrazone (CCCP), therefore may be driven by a proton gradient (PubMed:25901994, PubMed:8540696). Antibiotic efflux is inhibited by pyridopyrimidine derivatives, such as ABI-PP, acting by binding to a hydrophobic pocket in MexB (PubMed:23812586).</text>
</comment>
<comment type="subunit">
    <text evidence="5 6 8 9 11">Component of the MexAB-OprM multidrug efflux complex, composed of six MexA subunits forming a hexameric tube, binding to a MexB trimer, which interact with the trimeric OprM outer membrane channel protein (PubMed:15507433, PubMed:15797729, PubMed:30944318). The OprM homotrimer forms a 135 Angstroms-long pore (PubMed:15507433). It consists of a beta-barrel, which is probably inserted in the outer membrane, and an alpha-barrel formed by alpha-helices which probably spans the periplasm (PubMed:15507433). In the ground state the periplasmic end is closed, while the outer membrane end opening is 6-8 Angstroms in diameter (PubMed:15507433). OprM does not directly contact MexB; instead, MexA joins MexB and OprM by forming a funnel-like hexamer anchored to the inner membrane (PubMed:15507433, PubMed:30944318). MexA may initially form a hexameric ring complex with MexB prior to OprM, then OprM undergoes a conformational change as it contacts MexA, allowing the periplasmic gate to open (PubMed:25901994, PubMed:30944318, PubMed:33009415). It is thought that, under high intracellular substrate concentration, MexB ejects substrate into the tunnel formed by MexA-OprM; as the substrate level declines, conformational changes in MexB cause efflux to reduce and stop and the complex shifts to the closed state (PubMed:30944318, PubMed:33009415). MexB subunit acts as a substrate:proton antiporter and activity is enhanced significantly when in complex with MexA and OprM, in vitro (PubMed:25901994, PubMed:33009415).</text>
</comment>
<comment type="subcellular location">
    <subcellularLocation>
        <location evidence="2 4">Cell outer membrane</location>
        <topology evidence="1 2 4">Lipid-anchor</topology>
    </subcellularLocation>
    <text evidence="2 4">Attached to the outer membrane by a lipid anchor and via the transmembrane beta-barrel. The membrane anchor is not necessary for antibiotic efflux. In one report (PubMed:10889211) the Cys-18-Gly mutant is reported to be periplasmically located, in another (PubMed:11114896) the same protein is reported to be located in the outer membrane.</text>
</comment>
<comment type="induction">
    <text>By growth under severe iron limitation.</text>
</comment>
<comment type="disruption phenotype">
    <text evidence="16">Disruption of MexA, MexB and OprM significantly reduces active efflux of N-(3-oxododecanoyl) homoserine lactone/3-oxo-C12-HSL/PAI-1, but not N-butyryl homoserine lactone/C4-HSL/PAI-2.</text>
</comment>
<comment type="similarity">
    <text evidence="19">Belongs to the outer membrane factor (OMF) (TC 1.B.17) family.</text>
</comment>
<comment type="caution">
    <text evidence="10 16">Has been shown in one study to be involved in the active efflux of the autoinducer N-(3-oxododecanoyl) homoserine lactone (PubMed:9973347). However, has been shown in another study not to be involved in efflux of this autoinducer (PubMed:32715566).</text>
</comment>
<comment type="sequence caution" evidence="19">
    <conflict type="miscellaneous discrepancy">
        <sequence resource="EMBL-CDS" id="AAA74435"/>
    </conflict>
    <text>Contaminating sequence. Vector contamination due to cloning in a phagemid vector.</text>
</comment>
<dbReference type="EMBL" id="L23839">
    <property type="protein sequence ID" value="AAA74435.1"/>
    <property type="status" value="ALT_SEQ"/>
    <property type="molecule type" value="Genomic_DNA"/>
</dbReference>
<dbReference type="EMBL" id="AB011381">
    <property type="protein sequence ID" value="BAA28694.1"/>
    <property type="molecule type" value="Genomic_DNA"/>
</dbReference>
<dbReference type="EMBL" id="AE004091">
    <property type="protein sequence ID" value="AAG03816.1"/>
    <property type="molecule type" value="Genomic_DNA"/>
</dbReference>
<dbReference type="EMBL" id="L11616">
    <property type="protein sequence ID" value="AAA74438.1"/>
    <property type="molecule type" value="Genomic_DNA"/>
</dbReference>
<dbReference type="PIR" id="A49937">
    <property type="entry name" value="A49937"/>
</dbReference>
<dbReference type="PIR" id="F83593">
    <property type="entry name" value="F83593"/>
</dbReference>
<dbReference type="RefSeq" id="NP_249118.1">
    <property type="nucleotide sequence ID" value="NC_002516.2"/>
</dbReference>
<dbReference type="RefSeq" id="WP_003084633.1">
    <property type="nucleotide sequence ID" value="NZ_QZGE01000016.1"/>
</dbReference>
<dbReference type="PDB" id="1WP1">
    <property type="method" value="X-ray"/>
    <property type="resolution" value="2.56 A"/>
    <property type="chains" value="A/B=18-485"/>
</dbReference>
<dbReference type="PDB" id="3D5K">
    <property type="method" value="X-ray"/>
    <property type="resolution" value="2.40 A"/>
    <property type="chains" value="A/B/C=18-485"/>
</dbReference>
<dbReference type="PDB" id="4Y1K">
    <property type="method" value="X-ray"/>
    <property type="resolution" value="3.80 A"/>
    <property type="chains" value="A/B/C/D/E/F=18-485"/>
</dbReference>
<dbReference type="PDB" id="6IOK">
    <property type="method" value="EM"/>
    <property type="resolution" value="3.64 A"/>
    <property type="chains" value="A/B/C=18-485"/>
</dbReference>
<dbReference type="PDB" id="6IOL">
    <property type="method" value="EM"/>
    <property type="resolution" value="3.76 A"/>
    <property type="chains" value="A/B/C=18-485"/>
</dbReference>
<dbReference type="PDB" id="6TA5">
    <property type="method" value="EM"/>
    <property type="resolution" value="3.20 A"/>
    <property type="chains" value="A/B/C=18-485"/>
</dbReference>
<dbReference type="PDB" id="6TA6">
    <property type="method" value="EM"/>
    <property type="resolution" value="3.20 A"/>
    <property type="chains" value="A/B/C=18-485"/>
</dbReference>
<dbReference type="PDB" id="6ZRE">
    <property type="method" value="X-ray"/>
    <property type="resolution" value="2.80 A"/>
    <property type="chains" value="A/B=18-485"/>
</dbReference>
<dbReference type="PDB" id="7AKZ">
    <property type="method" value="X-ray"/>
    <property type="resolution" value="3.20 A"/>
    <property type="chains" value="A/B=18-485"/>
</dbReference>
<dbReference type="PDBsum" id="1WP1"/>
<dbReference type="PDBsum" id="3D5K"/>
<dbReference type="PDBsum" id="4Y1K"/>
<dbReference type="PDBsum" id="6IOK"/>
<dbReference type="PDBsum" id="6IOL"/>
<dbReference type="PDBsum" id="6TA5"/>
<dbReference type="PDBsum" id="6TA6"/>
<dbReference type="PDBsum" id="6ZRE"/>
<dbReference type="PDBsum" id="7AKZ"/>
<dbReference type="EMDB" id="EMD-9695"/>
<dbReference type="EMDB" id="EMD-9696"/>
<dbReference type="SMR" id="Q51487"/>
<dbReference type="FunCoup" id="Q51487">
    <property type="interactions" value="298"/>
</dbReference>
<dbReference type="STRING" id="208964.PA0427"/>
<dbReference type="ChEMBL" id="CHEMBL4523990"/>
<dbReference type="ChEMBL" id="CHEMBL4523991"/>
<dbReference type="DrugBank" id="DB14879">
    <property type="generic name" value="Cefiderocol"/>
</dbReference>
<dbReference type="CARD" id="ARO:3000379">
    <property type="molecule name" value="OprM"/>
    <property type="mechanism identifier" value="ARO:0010000"/>
    <property type="mechanism name" value="antibiotic efflux"/>
</dbReference>
<dbReference type="TCDB" id="2.A.6.2.21">
    <property type="family name" value="the resistance-nodulation-cell division (rnd) superfamily"/>
</dbReference>
<dbReference type="PaxDb" id="208964-PA0427"/>
<dbReference type="GeneID" id="877851"/>
<dbReference type="KEGG" id="pae:PA0427"/>
<dbReference type="PATRIC" id="fig|208964.12.peg.449"/>
<dbReference type="PseudoCAP" id="PA0427"/>
<dbReference type="HOGENOM" id="CLU_012817_13_3_6"/>
<dbReference type="InParanoid" id="Q51487"/>
<dbReference type="OrthoDB" id="9770517at2"/>
<dbReference type="PhylomeDB" id="Q51487"/>
<dbReference type="BioCyc" id="PAER208964:G1FZ6-431-MONOMER"/>
<dbReference type="EvolutionaryTrace" id="Q51487"/>
<dbReference type="Proteomes" id="UP000002438">
    <property type="component" value="Chromosome"/>
</dbReference>
<dbReference type="GO" id="GO:0009279">
    <property type="term" value="C:cell outer membrane"/>
    <property type="evidence" value="ECO:0007669"/>
    <property type="project" value="UniProtKB-SubCell"/>
</dbReference>
<dbReference type="GO" id="GO:1990281">
    <property type="term" value="C:efflux pump complex"/>
    <property type="evidence" value="ECO:0000314"/>
    <property type="project" value="UniProtKB"/>
</dbReference>
<dbReference type="GO" id="GO:0016020">
    <property type="term" value="C:membrane"/>
    <property type="evidence" value="ECO:0000318"/>
    <property type="project" value="GO_Central"/>
</dbReference>
<dbReference type="GO" id="GO:0015562">
    <property type="term" value="F:efflux transmembrane transporter activity"/>
    <property type="evidence" value="ECO:0000314"/>
    <property type="project" value="UniProtKB"/>
</dbReference>
<dbReference type="GO" id="GO:0022857">
    <property type="term" value="F:transmembrane transporter activity"/>
    <property type="evidence" value="ECO:0000318"/>
    <property type="project" value="GO_Central"/>
</dbReference>
<dbReference type="GO" id="GO:0046677">
    <property type="term" value="P:response to antibiotic"/>
    <property type="evidence" value="ECO:0007669"/>
    <property type="project" value="UniProtKB-KW"/>
</dbReference>
<dbReference type="GO" id="GO:0055085">
    <property type="term" value="P:transmembrane transport"/>
    <property type="evidence" value="ECO:0000314"/>
    <property type="project" value="UniProtKB"/>
</dbReference>
<dbReference type="GO" id="GO:0140330">
    <property type="term" value="P:xenobiotic detoxification by transmembrane export across the cell outer membrane"/>
    <property type="evidence" value="ECO:0000314"/>
    <property type="project" value="UniProtKB"/>
</dbReference>
<dbReference type="Gene3D" id="1.20.1600.10">
    <property type="entry name" value="Outer membrane efflux proteins (OEP)"/>
    <property type="match status" value="1"/>
</dbReference>
<dbReference type="Gene3D" id="2.20.200.10">
    <property type="entry name" value="Outer membrane efflux proteins (OEP)"/>
    <property type="match status" value="1"/>
</dbReference>
<dbReference type="InterPro" id="IPR050737">
    <property type="entry name" value="OMF"/>
</dbReference>
<dbReference type="InterPro" id="IPR003423">
    <property type="entry name" value="OMP_efflux"/>
</dbReference>
<dbReference type="InterPro" id="IPR010131">
    <property type="entry name" value="RND_efflux_OM_lipoprot_NodT"/>
</dbReference>
<dbReference type="NCBIfam" id="TIGR01845">
    <property type="entry name" value="outer_NodT"/>
    <property type="match status" value="1"/>
</dbReference>
<dbReference type="PANTHER" id="PTHR30203:SF32">
    <property type="entry name" value="CATION EFFLUX SYSTEM PROTEIN CUSC"/>
    <property type="match status" value="1"/>
</dbReference>
<dbReference type="PANTHER" id="PTHR30203">
    <property type="entry name" value="OUTER MEMBRANE CATION EFFLUX PROTEIN"/>
    <property type="match status" value="1"/>
</dbReference>
<dbReference type="Pfam" id="PF02321">
    <property type="entry name" value="OEP"/>
    <property type="match status" value="2"/>
</dbReference>
<dbReference type="SUPFAM" id="SSF56954">
    <property type="entry name" value="Outer membrane efflux proteins (OEP)"/>
    <property type="match status" value="1"/>
</dbReference>
<dbReference type="PROSITE" id="PS51257">
    <property type="entry name" value="PROKAR_LIPOPROTEIN"/>
    <property type="match status" value="1"/>
</dbReference>
<name>OPRM_PSEAE</name>
<accession>Q51487</accession>
<accession>Q51444</accession>
<accession>Q9ZNM1</accession>
<sequence length="485" mass="52598">MKRSFLSLAVAAVVLSGCSLIPDYQRPEAPVAAAYPQGQAYGQNTGAAAVPAADIGWREFFRDPQLQQLIGVALENNRDLRVAALNVEAFRAQYRIQRADLFPRIGVDGSGTRQRLPGDLSTTGSPAISSQYGVTLGTTAWELDLFGRLRSLRDQALEQYLATEQAQRSAQTTLVASVATAYLTLKADQAQLQLTKDTLGTYQKSFDLTQRSYDVGVASALDLRQAQTAVEGARATLAQYTRLVAQDQNALVLLLGSGIPANLPQGLGLDQTLLTEVPAGLPSDLLQRRPDILEAEHQLMAANASIGAARAAFFPSISLTANAGTMSRQLSGLFDAGSGSWLFQPSINLPIFTAGSLRASLDYAKIQKDINVAQYEKAIQTAFQEVADGLAARGTFTEQLQAQRDLVKASDEYYQLADKRYRTGVDNYLTLLDAQRSLFTAQQQLITDRLNQLTSEVNLYKALGGGWNQQTVTQQQTAKKEDPQA</sequence>
<evidence type="ECO:0000255" key="1">
    <source>
        <dbReference type="PROSITE-ProRule" id="PRU00303"/>
    </source>
</evidence>
<evidence type="ECO:0000269" key="2">
    <source>
    </source>
</evidence>
<evidence type="ECO:0000269" key="3">
    <source>
    </source>
</evidence>
<evidence type="ECO:0000269" key="4">
    <source>
    </source>
</evidence>
<evidence type="ECO:0000269" key="5">
    <source>
    </source>
</evidence>
<evidence type="ECO:0000269" key="6">
    <source>
    </source>
</evidence>
<evidence type="ECO:0000269" key="7">
    <source>
    </source>
</evidence>
<evidence type="ECO:0000269" key="8">
    <source>
    </source>
</evidence>
<evidence type="ECO:0000269" key="9">
    <source>
    </source>
</evidence>
<evidence type="ECO:0000269" key="10">
    <source>
    </source>
</evidence>
<evidence type="ECO:0000269" key="11">
    <source>
    </source>
</evidence>
<evidence type="ECO:0000269" key="12">
    <source>
    </source>
</evidence>
<evidence type="ECO:0000269" key="13">
    <source>
    </source>
</evidence>
<evidence type="ECO:0000269" key="14">
    <source>
    </source>
</evidence>
<evidence type="ECO:0000269" key="15">
    <source>
    </source>
</evidence>
<evidence type="ECO:0000269" key="16">
    <source>
    </source>
</evidence>
<evidence type="ECO:0000303" key="17">
    <source>
    </source>
</evidence>
<evidence type="ECO:0000303" key="18">
    <source>
    </source>
</evidence>
<evidence type="ECO:0000305" key="19"/>
<evidence type="ECO:0000305" key="20">
    <source>
    </source>
</evidence>
<evidence type="ECO:0007744" key="21">
    <source>
        <dbReference type="PDB" id="6IOK"/>
    </source>
</evidence>
<evidence type="ECO:0007744" key="22">
    <source>
        <dbReference type="PDB" id="6IOL"/>
    </source>
</evidence>
<evidence type="ECO:0007744" key="23">
    <source>
        <dbReference type="PDB" id="6TA5"/>
    </source>
</evidence>
<evidence type="ECO:0007744" key="24">
    <source>
        <dbReference type="PDB" id="6TA6"/>
    </source>
</evidence>
<evidence type="ECO:0007829" key="25">
    <source>
        <dbReference type="PDB" id="3D5K"/>
    </source>
</evidence>
<evidence type="ECO:0007829" key="26">
    <source>
        <dbReference type="PDB" id="6TA5"/>
    </source>
</evidence>
<evidence type="ECO:0007829" key="27">
    <source>
        <dbReference type="PDB" id="6TA6"/>
    </source>
</evidence>
<evidence type="ECO:0007829" key="28">
    <source>
        <dbReference type="PDB" id="6ZRE"/>
    </source>
</evidence>
<reference key="1">
    <citation type="journal article" date="1993" name="J. Bacteriol.">
        <title>Multiple antibiotic resistance in Pseudomonas aeruginosa: evidence for involvement of an efflux operon.</title>
        <authorList>
            <person name="Poole K."/>
            <person name="Krebes K."/>
            <person name="McNally C."/>
            <person name="Neshat S."/>
        </authorList>
    </citation>
    <scope>NUCLEOTIDE SEQUENCE [GENOMIC DNA]</scope>
    <scope>PROTEIN SEQUENCE OF 73-80</scope>
    <scope>FUNCTION AS AN ANTIBIOTIC EFFLUX PUMP</scope>
    <source>
        <strain>PAO6609</strain>
    </source>
</reference>
<reference key="2">
    <citation type="journal article" date="2000" name="J. Biol. Chem.">
        <title>Localization of the outer membrane subunit OprM of resistance-nodulation-cell division family multicomponent efflux pump in Pseudomonas aeruginosa.</title>
        <authorList>
            <person name="Nakajima A."/>
            <person name="Sugimoto Y."/>
            <person name="Yoneyama H."/>
            <person name="Nakae T."/>
        </authorList>
    </citation>
    <scope>NUCLEOTIDE SEQUENCE [GENOMIC DNA]</scope>
    <scope>SUBCELLULAR LOCATION</scope>
    <scope>DIACYLGLYCEROL AT CYS-18</scope>
    <scope>PALMITOYLATION AT CYS-18</scope>
    <scope>MUTAGENESIS OF CYS-18</scope>
    <source>
        <strain>PAO4290</strain>
    </source>
</reference>
<reference key="3">
    <citation type="journal article" date="2000" name="Nature">
        <title>Complete genome sequence of Pseudomonas aeruginosa PAO1, an opportunistic pathogen.</title>
        <authorList>
            <person name="Stover C.K."/>
            <person name="Pham X.-Q.T."/>
            <person name="Erwin A.L."/>
            <person name="Mizoguchi S.D."/>
            <person name="Warrener P."/>
            <person name="Hickey M.J."/>
            <person name="Brinkman F.S.L."/>
            <person name="Hufnagle W.O."/>
            <person name="Kowalik D.J."/>
            <person name="Lagrou M."/>
            <person name="Garber R.L."/>
            <person name="Goltry L."/>
            <person name="Tolentino E."/>
            <person name="Westbrock-Wadman S."/>
            <person name="Yuan Y."/>
            <person name="Brody L.L."/>
            <person name="Coulter S.N."/>
            <person name="Folger K.R."/>
            <person name="Kas A."/>
            <person name="Larbig K."/>
            <person name="Lim R.M."/>
            <person name="Smith K.A."/>
            <person name="Spencer D.H."/>
            <person name="Wong G.K.-S."/>
            <person name="Wu Z."/>
            <person name="Paulsen I.T."/>
            <person name="Reizer J."/>
            <person name="Saier M.H. Jr."/>
            <person name="Hancock R.E.W."/>
            <person name="Lory S."/>
            <person name="Olson M.V."/>
        </authorList>
    </citation>
    <scope>NUCLEOTIDE SEQUENCE [LARGE SCALE GENOMIC DNA]</scope>
    <source>
        <strain>ATCC 15692 / DSM 22644 / CIP 104116 / JCM 14847 / LMG 12228 / 1C / PRS 101 / PAO1</strain>
    </source>
</reference>
<reference key="4">
    <citation type="journal article" date="1993" name="Mol. Microbiol.">
        <title>Cloning and sequence analysis of an EnvCD homologue in Pseudomonas aeruginosa: regulation by iron and possible involvement in the secretion of the siderophore pyoverdine.</title>
        <authorList>
            <person name="Poole K."/>
            <person name="Heinrichs D.E."/>
            <person name="Neshat S."/>
        </authorList>
    </citation>
    <scope>NUCLEOTIDE SEQUENCE [GENOMIC DNA] OF 1-296</scope>
    <source>
        <strain>PAO6609</strain>
    </source>
</reference>
<reference key="5">
    <citation type="journal article" date="2004" name="J. Proteome Res.">
        <title>Global analysis of the membrane subproteome of Pseudomonas aeruginosa using liquid chromatography-tandem mass spectrometry.</title>
        <authorList>
            <person name="Blonder J."/>
            <person name="Goshe M.B."/>
            <person name="Xiao W."/>
            <person name="Camp D.G. II"/>
            <person name="Wingerd M."/>
            <person name="Davis R.W."/>
            <person name="Smith R.D."/>
        </authorList>
    </citation>
    <scope>PROTEIN SEQUENCE OF 151-168; 289-310; 329-358 AND 378-393</scope>
    <scope>IDENTIFICATION BY MASS SPECTROMETRY</scope>
    <source>
        <strain>ATCC 15692 / DSM 22644 / CIP 104116 / JCM 14847 / LMG 12228 / 1C / PRS 101 / PAO1</strain>
    </source>
</reference>
<reference key="6">
    <citation type="journal article" date="1995" name="Antimicrob. Agents Chemother.">
        <title>Role of mexA-mexB-oprM in antibiotic efflux in Pseudomonas aeruginosa.</title>
        <authorList>
            <person name="Li X.-Z."/>
            <person name="Nikaido H."/>
            <person name="Poole K."/>
        </authorList>
    </citation>
    <scope>FUNCTION IN ANTIBIOTIC EFFLUX</scope>
    <scope>ACTIVITY REGULATION</scope>
    <source>
        <strain>ATCC 15692 / DSM 22644 / CIP 104116 / JCM 14847 / LMG 12228 / 1C / PRS 101 / PAO1</strain>
    </source>
</reference>
<reference key="7">
    <citation type="journal article" date="1997" name="J. Bacteriol.">
        <title>Inner membrane efflux components are responsible for beta-lactam specificity of multidrug efflux pumps in Pseudomonas aeruginosa.</title>
        <authorList>
            <person name="Srikumar R."/>
            <person name="Li X.-Z."/>
            <person name="Poole K."/>
        </authorList>
    </citation>
    <scope>FUNCTION IN MEXCD PUMP</scope>
    <source>
        <strain>ML5087</strain>
    </source>
</reference>
<reference key="8">
    <citation type="journal article" date="1998" name="J. Bacteriol.">
        <title>Role of the multidrug efflux systems of Pseudomonas aeruginosa in organic solvent tolerance.</title>
        <authorList>
            <person name="Li X.-Z."/>
            <person name="Zhang L."/>
            <person name="Poole K."/>
        </authorList>
    </citation>
    <scope>FUNCTION IN SOLVENT EFFLUX</scope>
    <source>
        <strain>ATCC 15692 / DSM 22644 / CIP 104116 / JCM 14847 / LMG 12228 / 1C / PRS 101 / PAO1</strain>
    </source>
</reference>
<reference key="9">
    <citation type="journal article" date="1999" name="J. Bacteriol.">
        <title>Active efflux and diffusion are involved in transport of Pseudomonas aeruginosa cell-to-cell signals.</title>
        <authorList>
            <person name="Pearson J.P."/>
            <person name="Van Delden C."/>
            <person name="Iglewski B.H."/>
        </authorList>
    </citation>
    <scope>FUNCTION</scope>
    <scope>DISRUPTION PHENOTYPE</scope>
</reference>
<reference key="10">
    <citation type="journal article" date="2000" name="Antimicrob. Agents Chemother.">
        <title>Contribution of the MexX-MexY-oprM efflux system to intrinsic resistance in Pseudomonas aeruginosa.</title>
        <authorList>
            <person name="Masuda N."/>
            <person name="Sakagawa E."/>
            <person name="Ohya S."/>
            <person name="Gotoh N."/>
            <person name="Tsujimoto H."/>
            <person name="Nishino T."/>
        </authorList>
    </citation>
    <scope>FUNCTION IN MEXXY EFFLUX SYSTEM</scope>
    <source>
        <strain>ATCC 15692 / DSM 22644 / CIP 104116 / JCM 14847 / LMG 12228 / 1C / PRS 101 / PAO1</strain>
    </source>
</reference>
<reference key="11">
    <citation type="journal article" date="2001" name="J. Bacteriol.">
        <title>Mutational analysis of the OprM outer membrane component of the MexA-MexB-OprM multidrug efflux system of Pseudomonas aeruginosa.</title>
        <authorList>
            <person name="Li X.-Z."/>
            <person name="Poole K."/>
        </authorList>
    </citation>
    <scope>SUBCELLULAR LOCATION</scope>
    <scope>MUTAGENESIS OF THE SIGNAL SEQUENCE</scope>
    <scope>MUTAGENESIS OF CONSERVED AMINO ACIDS AND REGIONS</scope>
    <source>
        <strain>ML5087</strain>
    </source>
</reference>
<reference key="12">
    <citation type="journal article" date="2013" name="Nature">
        <title>Structural basis for the inhibition of bacterial multidrug exporters.</title>
        <authorList>
            <person name="Nakashima R."/>
            <person name="Sakurai K."/>
            <person name="Yamasaki S."/>
            <person name="Hayashi K."/>
            <person name="Nagata C."/>
            <person name="Hoshino K."/>
            <person name="Onodera Y."/>
            <person name="Nishino K."/>
            <person name="Yamaguchi A."/>
        </authorList>
    </citation>
    <scope>ACTIVITY REGULATION</scope>
</reference>
<reference key="13">
    <citation type="journal article" date="2015" name="Nat. Commun.">
        <title>In vitro transport activity of the fully assembled MexAB-OprM efflux pump from Pseudomonas aeruginosa.</title>
        <authorList>
            <person name="Verchere A."/>
            <person name="Dezi M."/>
            <person name="Adrien V."/>
            <person name="Broutin I."/>
            <person name="Picard M."/>
        </authorList>
    </citation>
    <scope>FUNCTION</scope>
    <scope>ACTIVITY REGULATION</scope>
    <scope>SUBUNIT</scope>
</reference>
<reference key="14">
    <citation type="journal article" date="2020" name="Environ. Microbiol.">
        <title>The impaired quorum sensing response of Pseudomonas aeruginosa MexAB-OprM efflux pump overexpressing mutants is not due to non-physiological efflux of 3-oxo-C12-HSL.</title>
        <authorList>
            <person name="Alcalde-Rico M."/>
            <person name="Olivares-Pacheco J."/>
            <person name="Halliday N."/>
            <person name="Camara M."/>
            <person name="Martinez J.L."/>
        </authorList>
    </citation>
    <scope>FUNCTION</scope>
</reference>
<reference key="15">
    <citation type="journal article" date="2004" name="J. Biol. Chem.">
        <title>Crystal structure of the drug discharge outer membrane protein, OprM, of Pseudomonas aeruginosa: dual modes of membrane anchoring and occluded cavity end.</title>
        <authorList>
            <person name="Akama H."/>
            <person name="Kanemaki M."/>
            <person name="Yoshimura M."/>
            <person name="Tsukihara T."/>
            <person name="Kashiwagi T."/>
            <person name="Yoneyama H."/>
            <person name="Narita S."/>
            <person name="Nakagawa A."/>
            <person name="Nakae T."/>
        </authorList>
    </citation>
    <scope>X-RAY CRYSTALLOGRAPHY (2.56 ANGSTROMS) OF 18-485</scope>
    <source>
        <strain>PAO4290</strain>
    </source>
</reference>
<reference key="16">
    <citation type="journal article" date="2005" name="J. Struct. Biol.">
        <title>Trimeric structure of OprN and OprM efflux proteins from Pseudomonas aeruginosa, by 2D electron crystallography.</title>
        <authorList>
            <person name="Lambert O."/>
            <person name="Benabdelhak H."/>
            <person name="Chami M."/>
            <person name="Jouan L."/>
            <person name="Nouaille E."/>
            <person name="Ducruix A."/>
            <person name="Brisson A."/>
        </authorList>
    </citation>
    <scope>TWO-DIMENSIONAL ELECTRON CRYSTALLOGRAPHY</scope>
    <source>
        <strain>ATCC 15692 / DSM 22644 / CIP 104116 / JCM 14847 / LMG 12228 / 1C / PRS 101 / PAO1</strain>
    </source>
</reference>
<reference evidence="21 22" key="17">
    <citation type="journal article" date="2019" name="Nat. Commun.">
        <title>Structures of the wild-type MexAB-OprM tripartite pump reveal its complex formation and drug efflux mechanism.</title>
        <authorList>
            <person name="Tsutsumi K."/>
            <person name="Yonehara R."/>
            <person name="Ishizaka-Ikeda E."/>
            <person name="Miyazaki N."/>
            <person name="Maeda S."/>
            <person name="Iwasaki K."/>
            <person name="Nakagawa A."/>
            <person name="Yamashita E."/>
        </authorList>
    </citation>
    <scope>STRUCTURE BY ELECTRON MICROSCOPY (3.64 ANGSTROMS) OF 18-485</scope>
    <scope>FUNCTION</scope>
    <scope>SUBUNIT</scope>
    <scope>MUTAGENESIS OF GLY-216; ARG-420 AND GLY-424</scope>
    <source>
        <strain>ATCC 15692 / DSM 22644 / CIP 104116 / JCM 14847 / LMG 12228 / 1C / PRS 101 / PAO1</strain>
    </source>
</reference>
<reference evidence="23 24" key="18">
    <citation type="journal article" date="2020" name="Nat. Commun.">
        <title>Antibiotic export by MexB multidrug efflux transporter is allosterically controlled by a MexA-OprM chaperone-like complex.</title>
        <authorList>
            <person name="Glavier M."/>
            <person name="Puvanendran D."/>
            <person name="Salvador D."/>
            <person name="Decossas M."/>
            <person name="Phan G."/>
            <person name="Garnier C."/>
            <person name="Frezza E."/>
            <person name="Cece Q."/>
            <person name="Schoehn G."/>
            <person name="Picard M."/>
            <person name="Taveau J.C."/>
            <person name="Daury L."/>
            <person name="Broutin I."/>
            <person name="Lambert O."/>
        </authorList>
    </citation>
    <scope>STRUCTURE BY ELECTRON MICROSCOPY (3.20 ANGSTROMS) OF 18-485</scope>
    <scope>FUNCTION</scope>
    <scope>SUBUNIT</scope>
</reference>